<reference key="1">
    <citation type="journal article" date="1994" name="Genes Dev.">
        <title>Dorsal midline fate in Drosophila embryos requires twisted gastrulation, a gene encoding a secreted protein related to human connective tissue growth factor.</title>
        <authorList>
            <person name="Mason E.D."/>
            <person name="Konrad K.D."/>
            <person name="Webb C.D."/>
            <person name="Marsh J.L."/>
        </authorList>
    </citation>
    <scope>NUCLEOTIDE SEQUENCE [GENOMIC DNA]</scope>
    <scope>FUNCTION</scope>
    <scope>DEVELOPMENTAL STAGE</scope>
    <scope>TISSUE SPECIFICITY</scope>
    <source>
        <tissue>Embryo</tissue>
    </source>
</reference>
<reference key="2">
    <citation type="journal article" date="2000" name="Science">
        <title>The genome sequence of Drosophila melanogaster.</title>
        <authorList>
            <person name="Adams M.D."/>
            <person name="Celniker S.E."/>
            <person name="Holt R.A."/>
            <person name="Evans C.A."/>
            <person name="Gocayne J.D."/>
            <person name="Amanatides P.G."/>
            <person name="Scherer S.E."/>
            <person name="Li P.W."/>
            <person name="Hoskins R.A."/>
            <person name="Galle R.F."/>
            <person name="George R.A."/>
            <person name="Lewis S.E."/>
            <person name="Richards S."/>
            <person name="Ashburner M."/>
            <person name="Henderson S.N."/>
            <person name="Sutton G.G."/>
            <person name="Wortman J.R."/>
            <person name="Yandell M.D."/>
            <person name="Zhang Q."/>
            <person name="Chen L.X."/>
            <person name="Brandon R.C."/>
            <person name="Rogers Y.-H.C."/>
            <person name="Blazej R.G."/>
            <person name="Champe M."/>
            <person name="Pfeiffer B.D."/>
            <person name="Wan K.H."/>
            <person name="Doyle C."/>
            <person name="Baxter E.G."/>
            <person name="Helt G."/>
            <person name="Nelson C.R."/>
            <person name="Miklos G.L.G."/>
            <person name="Abril J.F."/>
            <person name="Agbayani A."/>
            <person name="An H.-J."/>
            <person name="Andrews-Pfannkoch C."/>
            <person name="Baldwin D."/>
            <person name="Ballew R.M."/>
            <person name="Basu A."/>
            <person name="Baxendale J."/>
            <person name="Bayraktaroglu L."/>
            <person name="Beasley E.M."/>
            <person name="Beeson K.Y."/>
            <person name="Benos P.V."/>
            <person name="Berman B.P."/>
            <person name="Bhandari D."/>
            <person name="Bolshakov S."/>
            <person name="Borkova D."/>
            <person name="Botchan M.R."/>
            <person name="Bouck J."/>
            <person name="Brokstein P."/>
            <person name="Brottier P."/>
            <person name="Burtis K.C."/>
            <person name="Busam D.A."/>
            <person name="Butler H."/>
            <person name="Cadieu E."/>
            <person name="Center A."/>
            <person name="Chandra I."/>
            <person name="Cherry J.M."/>
            <person name="Cawley S."/>
            <person name="Dahlke C."/>
            <person name="Davenport L.B."/>
            <person name="Davies P."/>
            <person name="de Pablos B."/>
            <person name="Delcher A."/>
            <person name="Deng Z."/>
            <person name="Mays A.D."/>
            <person name="Dew I."/>
            <person name="Dietz S.M."/>
            <person name="Dodson K."/>
            <person name="Doup L.E."/>
            <person name="Downes M."/>
            <person name="Dugan-Rocha S."/>
            <person name="Dunkov B.C."/>
            <person name="Dunn P."/>
            <person name="Durbin K.J."/>
            <person name="Evangelista C.C."/>
            <person name="Ferraz C."/>
            <person name="Ferriera S."/>
            <person name="Fleischmann W."/>
            <person name="Fosler C."/>
            <person name="Gabrielian A.E."/>
            <person name="Garg N.S."/>
            <person name="Gelbart W.M."/>
            <person name="Glasser K."/>
            <person name="Glodek A."/>
            <person name="Gong F."/>
            <person name="Gorrell J.H."/>
            <person name="Gu Z."/>
            <person name="Guan P."/>
            <person name="Harris M."/>
            <person name="Harris N.L."/>
            <person name="Harvey D.A."/>
            <person name="Heiman T.J."/>
            <person name="Hernandez J.R."/>
            <person name="Houck J."/>
            <person name="Hostin D."/>
            <person name="Houston K.A."/>
            <person name="Howland T.J."/>
            <person name="Wei M.-H."/>
            <person name="Ibegwam C."/>
            <person name="Jalali M."/>
            <person name="Kalush F."/>
            <person name="Karpen G.H."/>
            <person name="Ke Z."/>
            <person name="Kennison J.A."/>
            <person name="Ketchum K.A."/>
            <person name="Kimmel B.E."/>
            <person name="Kodira C.D."/>
            <person name="Kraft C.L."/>
            <person name="Kravitz S."/>
            <person name="Kulp D."/>
            <person name="Lai Z."/>
            <person name="Lasko P."/>
            <person name="Lei Y."/>
            <person name="Levitsky A.A."/>
            <person name="Li J.H."/>
            <person name="Li Z."/>
            <person name="Liang Y."/>
            <person name="Lin X."/>
            <person name="Liu X."/>
            <person name="Mattei B."/>
            <person name="McIntosh T.C."/>
            <person name="McLeod M.P."/>
            <person name="McPherson D."/>
            <person name="Merkulov G."/>
            <person name="Milshina N.V."/>
            <person name="Mobarry C."/>
            <person name="Morris J."/>
            <person name="Moshrefi A."/>
            <person name="Mount S.M."/>
            <person name="Moy M."/>
            <person name="Murphy B."/>
            <person name="Murphy L."/>
            <person name="Muzny D.M."/>
            <person name="Nelson D.L."/>
            <person name="Nelson D.R."/>
            <person name="Nelson K.A."/>
            <person name="Nixon K."/>
            <person name="Nusskern D.R."/>
            <person name="Pacleb J.M."/>
            <person name="Palazzolo M."/>
            <person name="Pittman G.S."/>
            <person name="Pan S."/>
            <person name="Pollard J."/>
            <person name="Puri V."/>
            <person name="Reese M.G."/>
            <person name="Reinert K."/>
            <person name="Remington K."/>
            <person name="Saunders R.D.C."/>
            <person name="Scheeler F."/>
            <person name="Shen H."/>
            <person name="Shue B.C."/>
            <person name="Siden-Kiamos I."/>
            <person name="Simpson M."/>
            <person name="Skupski M.P."/>
            <person name="Smith T.J."/>
            <person name="Spier E."/>
            <person name="Spradling A.C."/>
            <person name="Stapleton M."/>
            <person name="Strong R."/>
            <person name="Sun E."/>
            <person name="Svirskas R."/>
            <person name="Tector C."/>
            <person name="Turner R."/>
            <person name="Venter E."/>
            <person name="Wang A.H."/>
            <person name="Wang X."/>
            <person name="Wang Z.-Y."/>
            <person name="Wassarman D.A."/>
            <person name="Weinstock G.M."/>
            <person name="Weissenbach J."/>
            <person name="Williams S.M."/>
            <person name="Woodage T."/>
            <person name="Worley K.C."/>
            <person name="Wu D."/>
            <person name="Yang S."/>
            <person name="Yao Q.A."/>
            <person name="Ye J."/>
            <person name="Yeh R.-F."/>
            <person name="Zaveri J.S."/>
            <person name="Zhan M."/>
            <person name="Zhang G."/>
            <person name="Zhao Q."/>
            <person name="Zheng L."/>
            <person name="Zheng X.H."/>
            <person name="Zhong F.N."/>
            <person name="Zhong W."/>
            <person name="Zhou X."/>
            <person name="Zhu S.C."/>
            <person name="Zhu X."/>
            <person name="Smith H.O."/>
            <person name="Gibbs R.A."/>
            <person name="Myers E.W."/>
            <person name="Rubin G.M."/>
            <person name="Venter J.C."/>
        </authorList>
    </citation>
    <scope>NUCLEOTIDE SEQUENCE [LARGE SCALE GENOMIC DNA]</scope>
    <source>
        <strain>Berkeley</strain>
    </source>
</reference>
<reference key="3">
    <citation type="journal article" date="2002" name="Genome Biol.">
        <title>Annotation of the Drosophila melanogaster euchromatic genome: a systematic review.</title>
        <authorList>
            <person name="Misra S."/>
            <person name="Crosby M.A."/>
            <person name="Mungall C.J."/>
            <person name="Matthews B.B."/>
            <person name="Campbell K.S."/>
            <person name="Hradecky P."/>
            <person name="Huang Y."/>
            <person name="Kaminker J.S."/>
            <person name="Millburn G.H."/>
            <person name="Prochnik S.E."/>
            <person name="Smith C.D."/>
            <person name="Tupy J.L."/>
            <person name="Whitfield E.J."/>
            <person name="Bayraktaroglu L."/>
            <person name="Berman B.P."/>
            <person name="Bettencourt B.R."/>
            <person name="Celniker S.E."/>
            <person name="de Grey A.D.N.J."/>
            <person name="Drysdale R.A."/>
            <person name="Harris N.L."/>
            <person name="Richter J."/>
            <person name="Russo S."/>
            <person name="Schroeder A.J."/>
            <person name="Shu S.Q."/>
            <person name="Stapleton M."/>
            <person name="Yamada C."/>
            <person name="Ashburner M."/>
            <person name="Gelbart W.M."/>
            <person name="Rubin G.M."/>
            <person name="Lewis S.E."/>
        </authorList>
    </citation>
    <scope>GENOME REANNOTATION</scope>
    <source>
        <strain>Berkeley</strain>
    </source>
</reference>
<reference key="4">
    <citation type="journal article" date="2001" name="Nature">
        <title>Twisted gastrulation is a conserved extracellular BMP antagonist.</title>
        <authorList>
            <person name="Ross J.J."/>
            <person name="Shimmi O."/>
            <person name="Vilmos P."/>
            <person name="Petryk A."/>
            <person name="Kim H."/>
            <person name="Gaudenz K."/>
            <person name="Hermanson S."/>
            <person name="Ekker S.C."/>
            <person name="O'Connor M.B."/>
            <person name="Marsh J.L."/>
        </authorList>
    </citation>
    <scope>FUNCTION</scope>
    <scope>INTERACTION WITH DPP AND SOG</scope>
</reference>
<comment type="function">
    <text evidence="2 3">Involved in dorsal-ventral patterning. Required for specification of a narrow strip of dorsal midline cells that will give rise to the amnioserosa, but not for specification of dorsal ectoderm cells. Inhibits BMP signaling; enhances the binding of sog to dpp, thus enhancing the antagonistic activity of sog.</text>
</comment>
<comment type="subunit">
    <text>Component of a complex composed of dpp, sog and tsg.</text>
</comment>
<comment type="subcellular location">
    <subcellularLocation>
        <location>Secreted</location>
    </subcellularLocation>
</comment>
<comment type="tissue specificity">
    <text evidence="3">First appears in stage 4 embryos, expressed in two domains: a broad mid-dorsal saddle and an anterior cap, expression between the domains is continuous across the dorsal midline. At stage 5, expression is refined into 4 graded stripes in the mid-dorsal region and a paired domain in the anterior region. During stages 7 and 8, anterior expression fades and the mid dorsal stripes are located between the anterior and posterior transverse furrow (ATF and PTF). Expressing cells become incorporated into the deepening PTF.</text>
</comment>
<comment type="developmental stage">
    <text evidence="3">Gastrulating embryo.</text>
</comment>
<comment type="similarity">
    <text evidence="4">Belongs to the twisted gastrulation protein family.</text>
</comment>
<accession>P54356</accession>
<accession>Q9VYR6</accession>
<evidence type="ECO:0000255" key="1"/>
<evidence type="ECO:0000269" key="2">
    <source>
    </source>
</evidence>
<evidence type="ECO:0000269" key="3">
    <source>
    </source>
</evidence>
<evidence type="ECO:0000305" key="4"/>
<keyword id="KW-0217">Developmental protein</keyword>
<keyword id="KW-0325">Glycoprotein</keyword>
<keyword id="KW-1185">Reference proteome</keyword>
<keyword id="KW-0964">Secreted</keyword>
<keyword id="KW-0732">Signal</keyword>
<feature type="signal peptide" evidence="1">
    <location>
        <begin position="1"/>
        <end position="23"/>
    </location>
</feature>
<feature type="chain" id="PRO_0000022598" description="Protein twisted gastrulation">
    <location>
        <begin position="24"/>
        <end position="249"/>
    </location>
</feature>
<feature type="glycosylation site" description="N-linked (GlcNAc...) asparagine" evidence="1">
    <location>
        <position position="199"/>
    </location>
</feature>
<protein>
    <recommendedName>
        <fullName>Protein twisted gastrulation</fullName>
    </recommendedName>
</protein>
<dbReference type="EMBL" id="U09808">
    <property type="protein sequence ID" value="AAC24234.1"/>
    <property type="molecule type" value="Genomic_DNA"/>
</dbReference>
<dbReference type="EMBL" id="AE014298">
    <property type="protein sequence ID" value="AAF48123.1"/>
    <property type="molecule type" value="Genomic_DNA"/>
</dbReference>
<dbReference type="PIR" id="A53836">
    <property type="entry name" value="A53836"/>
</dbReference>
<dbReference type="RefSeq" id="NP_511135.1">
    <property type="nucleotide sequence ID" value="NM_078580.4"/>
</dbReference>
<dbReference type="SMR" id="P54356"/>
<dbReference type="BioGRID" id="58565">
    <property type="interactions" value="14"/>
</dbReference>
<dbReference type="DIP" id="DIP-17785N"/>
<dbReference type="FunCoup" id="P54356">
    <property type="interactions" value="58"/>
</dbReference>
<dbReference type="STRING" id="7227.FBpp0073426"/>
<dbReference type="GlyCosmos" id="P54356">
    <property type="glycosylation" value="1 site, No reported glycans"/>
</dbReference>
<dbReference type="GlyGen" id="P54356">
    <property type="glycosylation" value="1 site"/>
</dbReference>
<dbReference type="PaxDb" id="7227-FBpp0073426"/>
<dbReference type="DNASU" id="32160"/>
<dbReference type="EnsemblMetazoa" id="FBtr0073582">
    <property type="protein sequence ID" value="FBpp0073426"/>
    <property type="gene ID" value="FBgn0003865"/>
</dbReference>
<dbReference type="GeneID" id="32160"/>
<dbReference type="KEGG" id="dme:Dmel_CG1502"/>
<dbReference type="AGR" id="FB:FBgn0003865"/>
<dbReference type="CTD" id="32160"/>
<dbReference type="FlyBase" id="FBgn0003865">
    <property type="gene designation" value="tsg"/>
</dbReference>
<dbReference type="VEuPathDB" id="VectorBase:FBgn0003865"/>
<dbReference type="eggNOG" id="ENOG502QRE9">
    <property type="taxonomic scope" value="Eukaryota"/>
</dbReference>
<dbReference type="GeneTree" id="ENSGT00390000007058"/>
<dbReference type="HOGENOM" id="CLU_082511_0_0_1"/>
<dbReference type="InParanoid" id="P54356"/>
<dbReference type="OMA" id="CCRECAF"/>
<dbReference type="OrthoDB" id="10037323at2759"/>
<dbReference type="PhylomeDB" id="P54356"/>
<dbReference type="BioGRID-ORCS" id="32160">
    <property type="hits" value="0 hits in 1 CRISPR screen"/>
</dbReference>
<dbReference type="GenomeRNAi" id="32160"/>
<dbReference type="PRO" id="PR:P54356"/>
<dbReference type="Proteomes" id="UP000000803">
    <property type="component" value="Chromosome X"/>
</dbReference>
<dbReference type="Bgee" id="FBgn0003865">
    <property type="expression patterns" value="Expressed in cleaving embryo and 2 other cell types or tissues"/>
</dbReference>
<dbReference type="ExpressionAtlas" id="P54356">
    <property type="expression patterns" value="baseline and differential"/>
</dbReference>
<dbReference type="GO" id="GO:0005576">
    <property type="term" value="C:extracellular region"/>
    <property type="evidence" value="ECO:0000314"/>
    <property type="project" value="FlyBase"/>
</dbReference>
<dbReference type="GO" id="GO:0005615">
    <property type="term" value="C:extracellular space"/>
    <property type="evidence" value="ECO:0000314"/>
    <property type="project" value="FlyBase"/>
</dbReference>
<dbReference type="GO" id="GO:0036122">
    <property type="term" value="F:BMP binding"/>
    <property type="evidence" value="ECO:0000353"/>
    <property type="project" value="FlyBase"/>
</dbReference>
<dbReference type="GO" id="GO:0061133">
    <property type="term" value="F:endopeptidase activator activity"/>
    <property type="evidence" value="ECO:0000314"/>
    <property type="project" value="FlyBase"/>
</dbReference>
<dbReference type="GO" id="GO:0008201">
    <property type="term" value="F:heparin binding"/>
    <property type="evidence" value="ECO:0000314"/>
    <property type="project" value="FlyBase"/>
</dbReference>
<dbReference type="GO" id="GO:0007378">
    <property type="term" value="P:amnioserosa formation"/>
    <property type="evidence" value="ECO:0000315"/>
    <property type="project" value="FlyBase"/>
</dbReference>
<dbReference type="GO" id="GO:0030514">
    <property type="term" value="P:negative regulation of BMP signaling pathway"/>
    <property type="evidence" value="ECO:0000314"/>
    <property type="project" value="FlyBase"/>
</dbReference>
<dbReference type="GO" id="GO:0030510">
    <property type="term" value="P:regulation of BMP signaling pathway"/>
    <property type="evidence" value="ECO:0000318"/>
    <property type="project" value="GO_Central"/>
</dbReference>
<dbReference type="InterPro" id="IPR006761">
    <property type="entry name" value="Tsg"/>
</dbReference>
<dbReference type="PANTHER" id="PTHR12312">
    <property type="entry name" value="TWISTED GASTRULATION PROTEIN HOMOLOG 1-A-RELATED"/>
    <property type="match status" value="1"/>
</dbReference>
<dbReference type="PANTHER" id="PTHR12312:SF16">
    <property type="entry name" value="TWISTED GASTRULATION PROTEIN HOMOLOG 1-A-RELATED"/>
    <property type="match status" value="1"/>
</dbReference>
<dbReference type="Pfam" id="PF04668">
    <property type="entry name" value="Tsg"/>
    <property type="match status" value="1"/>
</dbReference>
<dbReference type="Pfam" id="PF23782">
    <property type="entry name" value="Tsg_N"/>
    <property type="match status" value="1"/>
</dbReference>
<gene>
    <name type="primary">tsg</name>
    <name type="ORF">CG1502</name>
</gene>
<name>TSG_DROME</name>
<organism>
    <name type="scientific">Drosophila melanogaster</name>
    <name type="common">Fruit fly</name>
    <dbReference type="NCBI Taxonomy" id="7227"/>
    <lineage>
        <taxon>Eukaryota</taxon>
        <taxon>Metazoa</taxon>
        <taxon>Ecdysozoa</taxon>
        <taxon>Arthropoda</taxon>
        <taxon>Hexapoda</taxon>
        <taxon>Insecta</taxon>
        <taxon>Pterygota</taxon>
        <taxon>Neoptera</taxon>
        <taxon>Endopterygota</taxon>
        <taxon>Diptera</taxon>
        <taxon>Brachycera</taxon>
        <taxon>Muscomorpha</taxon>
        <taxon>Ephydroidea</taxon>
        <taxon>Drosophilidae</taxon>
        <taxon>Drosophila</taxon>
        <taxon>Sophophora</taxon>
    </lineage>
</organism>
<proteinExistence type="evidence at protein level"/>
<sequence length="249" mass="27220">MQLLCYFVILFVGIAPWSSLANDDGCNEVVCGSVVSKCLITQSCQCKLNDCHCCKDCLNCLGELYIECCGCLDMCPKHKDVLPSLTPRSEIGDIEGVPELFDTLTAEDDEGWSTIRFSMRAGFKQRVQGGASGDAGNGNGNGNAGSAGVTLCTVIYVNSCIRANKCRQQCESMGASSYRWFHDGCCECVGENCLNYGINESRCRGCPEDQDQLLTADTVPAEAEQDLERFFGNEEIEDEWGYGEEDEFS</sequence>